<geneLocation type="chloroplast"/>
<protein>
    <recommendedName>
        <fullName evidence="2">Cytochrome f</fullName>
    </recommendedName>
</protein>
<gene>
    <name evidence="2" type="primary">petA</name>
</gene>
<accession>Q32RJ3</accession>
<keyword id="KW-0150">Chloroplast</keyword>
<keyword id="KW-0249">Electron transport</keyword>
<keyword id="KW-0349">Heme</keyword>
<keyword id="KW-0408">Iron</keyword>
<keyword id="KW-0472">Membrane</keyword>
<keyword id="KW-0479">Metal-binding</keyword>
<keyword id="KW-0602">Photosynthesis</keyword>
<keyword id="KW-0934">Plastid</keyword>
<keyword id="KW-0732">Signal</keyword>
<keyword id="KW-0793">Thylakoid</keyword>
<keyword id="KW-0812">Transmembrane</keyword>
<keyword id="KW-1133">Transmembrane helix</keyword>
<keyword id="KW-0813">Transport</keyword>
<evidence type="ECO:0000250" key="1"/>
<evidence type="ECO:0000255" key="2">
    <source>
        <dbReference type="HAMAP-Rule" id="MF_00610"/>
    </source>
</evidence>
<reference key="1">
    <citation type="journal article" date="2005" name="BMC Biol.">
        <title>The complete chloroplast DNA sequences of the charophycean green algae Staurastrum and Zygnema reveal that the chloroplast genome underwent extensive changes during the evolution of the Zygnematales.</title>
        <authorList>
            <person name="Turmel M."/>
            <person name="Otis C."/>
            <person name="Lemieux C."/>
        </authorList>
    </citation>
    <scope>NUCLEOTIDE SEQUENCE [LARGE SCALE GENOMIC DNA]</scope>
</reference>
<organism>
    <name type="scientific">Zygnema circumcarinatum</name>
    <name type="common">Green alga</name>
    <dbReference type="NCBI Taxonomy" id="35869"/>
    <lineage>
        <taxon>Eukaryota</taxon>
        <taxon>Viridiplantae</taxon>
        <taxon>Streptophyta</taxon>
        <taxon>Zygnematophyceae</taxon>
        <taxon>Zygnematophycidae</taxon>
        <taxon>Zygnematales</taxon>
        <taxon>Zygnemataceae</taxon>
        <taxon>Zygnema</taxon>
    </lineage>
</organism>
<comment type="function">
    <text evidence="2">Component of the cytochrome b6-f complex, which mediates electron transfer between photosystem II (PSII) and photosystem I (PSI), cyclic electron flow around PSI, and state transitions.</text>
</comment>
<comment type="cofactor">
    <cofactor evidence="2">
        <name>heme</name>
        <dbReference type="ChEBI" id="CHEBI:30413"/>
    </cofactor>
    <text evidence="2">Binds 1 heme group covalently.</text>
</comment>
<comment type="subunit">
    <text evidence="1">The 4 large subunits of the cytochrome b6-f complex are cytochrome b6, subunit IV (17 kDa polypeptide, petD), cytochrome f and the Rieske protein, while the 4 small subunits are PetG, PetL, PetM and PetN. The complex functions as a dimer (By similarity).</text>
</comment>
<comment type="subcellular location">
    <subcellularLocation>
        <location evidence="2">Plastid</location>
        <location evidence="2">Chloroplast thylakoid membrane</location>
        <topology evidence="2">Single-pass membrane protein</topology>
    </subcellularLocation>
</comment>
<comment type="similarity">
    <text evidence="2">Belongs to the cytochrome f family.</text>
</comment>
<name>CYF_ZYGCR</name>
<feature type="signal peptide" evidence="2">
    <location>
        <begin position="1"/>
        <end position="35"/>
    </location>
</feature>
<feature type="chain" id="PRO_0000275461" description="Cytochrome f">
    <location>
        <begin position="36"/>
        <end position="319"/>
    </location>
</feature>
<feature type="transmembrane region" description="Helical" evidence="2">
    <location>
        <begin position="285"/>
        <end position="305"/>
    </location>
</feature>
<feature type="binding site" description="axial binding residue" evidence="2">
    <location>
        <position position="36"/>
    </location>
    <ligand>
        <name>heme</name>
        <dbReference type="ChEBI" id="CHEBI:30413"/>
    </ligand>
    <ligandPart>
        <name>Fe</name>
        <dbReference type="ChEBI" id="CHEBI:18248"/>
    </ligandPart>
</feature>
<feature type="binding site" description="covalent" evidence="2">
    <location>
        <position position="56"/>
    </location>
    <ligand>
        <name>heme</name>
        <dbReference type="ChEBI" id="CHEBI:30413"/>
    </ligand>
</feature>
<feature type="binding site" description="covalent" evidence="2">
    <location>
        <position position="59"/>
    </location>
    <ligand>
        <name>heme</name>
        <dbReference type="ChEBI" id="CHEBI:30413"/>
    </ligand>
</feature>
<feature type="binding site" description="axial binding residue" evidence="2">
    <location>
        <position position="60"/>
    </location>
    <ligand>
        <name>heme</name>
        <dbReference type="ChEBI" id="CHEBI:30413"/>
    </ligand>
    <ligandPart>
        <name>Fe</name>
        <dbReference type="ChEBI" id="CHEBI:18248"/>
    </ligandPart>
</feature>
<proteinExistence type="inferred from homology"/>
<sequence length="319" mass="34884">MQKKDVCEYITKWVSVTISTLVTIGVLVFPLSSEAYPIFAQQNYESPREATGRIVCANCHLAKKPVEIEVPQAVLPDTVFEAVVKIPYDKQINQVLANGKPGGLNVGAVLILPEGFQLAPPERIPPELKEKIGNLYFQPYRPEKSNILVVGPVPGKTYSEMVFPILAPDPSVNKQAYFLKYPIYLGGNRGRGQIYPDGSKSNNTVYNSPVTGTITSITKNKKGASTVTIITTDNREVVELIPAGPTLLISEGDTVKADQPLTNNPNVGGFGQADAEIVLQDPLRIQGLLVFFASVVLAQIFLVLKKKQFEKVQLAEMNF</sequence>
<dbReference type="EMBL" id="AY958086">
    <property type="protein sequence ID" value="AAX45824.1"/>
    <property type="molecule type" value="Genomic_DNA"/>
</dbReference>
<dbReference type="RefSeq" id="YP_636533.1">
    <property type="nucleotide sequence ID" value="NC_008117.1"/>
</dbReference>
<dbReference type="SMR" id="Q32RJ3"/>
<dbReference type="GeneID" id="4108144"/>
<dbReference type="GO" id="GO:0009535">
    <property type="term" value="C:chloroplast thylakoid membrane"/>
    <property type="evidence" value="ECO:0007669"/>
    <property type="project" value="UniProtKB-SubCell"/>
</dbReference>
<dbReference type="GO" id="GO:0009055">
    <property type="term" value="F:electron transfer activity"/>
    <property type="evidence" value="ECO:0007669"/>
    <property type="project" value="UniProtKB-UniRule"/>
</dbReference>
<dbReference type="GO" id="GO:0020037">
    <property type="term" value="F:heme binding"/>
    <property type="evidence" value="ECO:0007669"/>
    <property type="project" value="InterPro"/>
</dbReference>
<dbReference type="GO" id="GO:0005506">
    <property type="term" value="F:iron ion binding"/>
    <property type="evidence" value="ECO:0007669"/>
    <property type="project" value="InterPro"/>
</dbReference>
<dbReference type="GO" id="GO:0015979">
    <property type="term" value="P:photosynthesis"/>
    <property type="evidence" value="ECO:0007669"/>
    <property type="project" value="UniProtKB-UniRule"/>
</dbReference>
<dbReference type="FunFam" id="1.20.5.700:FF:000001">
    <property type="entry name" value="Cytochrome f"/>
    <property type="match status" value="1"/>
</dbReference>
<dbReference type="FunFam" id="2.60.40.830:FF:000001">
    <property type="entry name" value="Cytochrome f"/>
    <property type="match status" value="1"/>
</dbReference>
<dbReference type="Gene3D" id="2.40.50.100">
    <property type="match status" value="1"/>
</dbReference>
<dbReference type="Gene3D" id="2.60.40.830">
    <property type="entry name" value="Cytochrome f large domain"/>
    <property type="match status" value="1"/>
</dbReference>
<dbReference type="Gene3D" id="1.20.5.700">
    <property type="entry name" value="Single helix bin"/>
    <property type="match status" value="1"/>
</dbReference>
<dbReference type="HAMAP" id="MF_00610">
    <property type="entry name" value="Cytb6_f_cytF"/>
    <property type="match status" value="1"/>
</dbReference>
<dbReference type="InterPro" id="IPR024058">
    <property type="entry name" value="Cyt-f_TM"/>
</dbReference>
<dbReference type="InterPro" id="IPR002325">
    <property type="entry name" value="Cyt_f"/>
</dbReference>
<dbReference type="InterPro" id="IPR024094">
    <property type="entry name" value="Cyt_f_lg_dom"/>
</dbReference>
<dbReference type="InterPro" id="IPR036826">
    <property type="entry name" value="Cyt_f_lg_dom_sf"/>
</dbReference>
<dbReference type="InterPro" id="IPR011054">
    <property type="entry name" value="Rudment_hybrid_motif"/>
</dbReference>
<dbReference type="PANTHER" id="PTHR33288">
    <property type="match status" value="1"/>
</dbReference>
<dbReference type="PANTHER" id="PTHR33288:SF10">
    <property type="entry name" value="CYTOCHROME F"/>
    <property type="match status" value="1"/>
</dbReference>
<dbReference type="Pfam" id="PF01333">
    <property type="entry name" value="Apocytochr_F_C"/>
    <property type="match status" value="1"/>
</dbReference>
<dbReference type="Pfam" id="PF16639">
    <property type="entry name" value="Apocytochr_F_N"/>
    <property type="match status" value="1"/>
</dbReference>
<dbReference type="PRINTS" id="PR00610">
    <property type="entry name" value="CYTOCHROMEF"/>
</dbReference>
<dbReference type="SUPFAM" id="SSF103431">
    <property type="entry name" value="Cytochrome f subunit of the cytochrome b6f complex, transmembrane anchor"/>
    <property type="match status" value="1"/>
</dbReference>
<dbReference type="SUPFAM" id="SSF49441">
    <property type="entry name" value="Cytochrome f, large domain"/>
    <property type="match status" value="1"/>
</dbReference>
<dbReference type="SUPFAM" id="SSF51246">
    <property type="entry name" value="Rudiment single hybrid motif"/>
    <property type="match status" value="1"/>
</dbReference>
<dbReference type="PROSITE" id="PS51010">
    <property type="entry name" value="CYTF"/>
    <property type="match status" value="1"/>
</dbReference>